<sequence>MSRDIIKLDQIDVTFHQKKRTITAVKDVTIHIQEGDIYGIVGYSGAGKSTLVRVINLLQKPSAGKITIDDDVIFDGKVTLTAEQLRRKRQDIGMIFQHFNLMSQKTAEENVAFALKHSELSKEEKKAKVAKLLDLVGLADRAENYPSQLSGGQKQRVAIARALANDPKILISDESTSALDPKTTKQILALLQDLNQKLGLTVVLITHEMQIVKDIANRVAVMQDGHLIEEGSVLEIFSNPKQPLTQDFISTATGIDEAMVKIEKQEIVEHLSENSLLVQLKYAGASTDEPLLNELYKHYQVMANILYGNIEILDGTPVGELVVVLSGEKAALAGAQEAIRQAGVQLKVLKGVQ</sequence>
<keyword id="KW-0029">Amino-acid transport</keyword>
<keyword id="KW-0067">ATP-binding</keyword>
<keyword id="KW-1003">Cell membrane</keyword>
<keyword id="KW-0472">Membrane</keyword>
<keyword id="KW-0547">Nucleotide-binding</keyword>
<keyword id="KW-1185">Reference proteome</keyword>
<keyword id="KW-1278">Translocase</keyword>
<keyword id="KW-0813">Transport</keyword>
<proteinExistence type="inferred from homology"/>
<name>METN_STRPN</name>
<comment type="function">
    <text evidence="1">Part of the ABC transporter complex MetNIQ involved in methionine import. Responsible for energy coupling to the transport system.</text>
</comment>
<comment type="catalytic activity">
    <reaction evidence="1">
        <text>L-methionine(out) + ATP + H2O = L-methionine(in) + ADP + phosphate + H(+)</text>
        <dbReference type="Rhea" id="RHEA:29779"/>
        <dbReference type="ChEBI" id="CHEBI:15377"/>
        <dbReference type="ChEBI" id="CHEBI:15378"/>
        <dbReference type="ChEBI" id="CHEBI:30616"/>
        <dbReference type="ChEBI" id="CHEBI:43474"/>
        <dbReference type="ChEBI" id="CHEBI:57844"/>
        <dbReference type="ChEBI" id="CHEBI:456216"/>
        <dbReference type="EC" id="7.4.2.11"/>
    </reaction>
</comment>
<comment type="catalytic activity">
    <reaction evidence="1">
        <text>D-methionine(out) + ATP + H2O = D-methionine(in) + ADP + phosphate + H(+)</text>
        <dbReference type="Rhea" id="RHEA:29767"/>
        <dbReference type="ChEBI" id="CHEBI:15377"/>
        <dbReference type="ChEBI" id="CHEBI:15378"/>
        <dbReference type="ChEBI" id="CHEBI:30616"/>
        <dbReference type="ChEBI" id="CHEBI:43474"/>
        <dbReference type="ChEBI" id="CHEBI:57932"/>
        <dbReference type="ChEBI" id="CHEBI:456216"/>
        <dbReference type="EC" id="7.4.2.11"/>
    </reaction>
</comment>
<comment type="subunit">
    <text evidence="1">The complex is composed of two ATP-binding proteins (MetN), two transmembrane proteins (MetI) and a solute-binding protein (MetQ).</text>
</comment>
<comment type="subcellular location">
    <subcellularLocation>
        <location evidence="1">Cell membrane</location>
        <topology evidence="1">Peripheral membrane protein</topology>
    </subcellularLocation>
</comment>
<comment type="similarity">
    <text evidence="1">Belongs to the ABC transporter superfamily. Methionine importer (TC 3.A.1.24) family.</text>
</comment>
<feature type="chain" id="PRO_0000270415" description="Methionine import ATP-binding protein MetN">
    <location>
        <begin position="1"/>
        <end position="353"/>
    </location>
</feature>
<feature type="domain" description="ABC transporter" evidence="1">
    <location>
        <begin position="8"/>
        <end position="249"/>
    </location>
</feature>
<feature type="binding site" evidence="1">
    <location>
        <begin position="42"/>
        <end position="49"/>
    </location>
    <ligand>
        <name>ATP</name>
        <dbReference type="ChEBI" id="CHEBI:30616"/>
    </ligand>
</feature>
<protein>
    <recommendedName>
        <fullName evidence="1">Methionine import ATP-binding protein MetN</fullName>
        <ecNumber evidence="1">7.4.2.11</ecNumber>
    </recommendedName>
</protein>
<gene>
    <name evidence="1" type="primary">metN</name>
    <name type="ordered locus">SP_0151</name>
</gene>
<accession>Q97T09</accession>
<dbReference type="EC" id="7.4.2.11" evidence="1"/>
<dbReference type="EMBL" id="AE005672">
    <property type="protein sequence ID" value="AAK74333.1"/>
    <property type="molecule type" value="Genomic_DNA"/>
</dbReference>
<dbReference type="PIR" id="D95017">
    <property type="entry name" value="D95017"/>
</dbReference>
<dbReference type="RefSeq" id="WP_000085659.1">
    <property type="nucleotide sequence ID" value="NZ_CP155539.1"/>
</dbReference>
<dbReference type="SMR" id="Q97T09"/>
<dbReference type="PaxDb" id="170187-SP_0151"/>
<dbReference type="EnsemblBacteria" id="AAK74333">
    <property type="protein sequence ID" value="AAK74333"/>
    <property type="gene ID" value="SP_0151"/>
</dbReference>
<dbReference type="KEGG" id="spn:SP_0151"/>
<dbReference type="eggNOG" id="COG1135">
    <property type="taxonomic scope" value="Bacteria"/>
</dbReference>
<dbReference type="PhylomeDB" id="Q97T09"/>
<dbReference type="BioCyc" id="SPNE170187:G1FZB-160-MONOMER"/>
<dbReference type="Proteomes" id="UP000000585">
    <property type="component" value="Chromosome"/>
</dbReference>
<dbReference type="GO" id="GO:0005886">
    <property type="term" value="C:plasma membrane"/>
    <property type="evidence" value="ECO:0007669"/>
    <property type="project" value="UniProtKB-SubCell"/>
</dbReference>
<dbReference type="GO" id="GO:0033232">
    <property type="term" value="F:ABC-type D-methionine transporter activity"/>
    <property type="evidence" value="ECO:0007669"/>
    <property type="project" value="UniProtKB-EC"/>
</dbReference>
<dbReference type="GO" id="GO:0005524">
    <property type="term" value="F:ATP binding"/>
    <property type="evidence" value="ECO:0007669"/>
    <property type="project" value="UniProtKB-KW"/>
</dbReference>
<dbReference type="GO" id="GO:0016887">
    <property type="term" value="F:ATP hydrolysis activity"/>
    <property type="evidence" value="ECO:0007669"/>
    <property type="project" value="InterPro"/>
</dbReference>
<dbReference type="FunFam" id="3.40.50.300:FF:000056">
    <property type="entry name" value="Cell division ATP-binding protein FtsE"/>
    <property type="match status" value="1"/>
</dbReference>
<dbReference type="Gene3D" id="3.30.70.260">
    <property type="match status" value="1"/>
</dbReference>
<dbReference type="Gene3D" id="3.40.50.300">
    <property type="entry name" value="P-loop containing nucleotide triphosphate hydrolases"/>
    <property type="match status" value="1"/>
</dbReference>
<dbReference type="InterPro" id="IPR003593">
    <property type="entry name" value="AAA+_ATPase"/>
</dbReference>
<dbReference type="InterPro" id="IPR003439">
    <property type="entry name" value="ABC_transporter-like_ATP-bd"/>
</dbReference>
<dbReference type="InterPro" id="IPR017871">
    <property type="entry name" value="ABC_transporter-like_CS"/>
</dbReference>
<dbReference type="InterPro" id="IPR045865">
    <property type="entry name" value="ACT-like_dom_sf"/>
</dbReference>
<dbReference type="InterPro" id="IPR050086">
    <property type="entry name" value="MetN_ABC_transporter-like"/>
</dbReference>
<dbReference type="InterPro" id="IPR018449">
    <property type="entry name" value="NIL_domain"/>
</dbReference>
<dbReference type="InterPro" id="IPR027417">
    <property type="entry name" value="P-loop_NTPase"/>
</dbReference>
<dbReference type="PANTHER" id="PTHR43166">
    <property type="entry name" value="AMINO ACID IMPORT ATP-BINDING PROTEIN"/>
    <property type="match status" value="1"/>
</dbReference>
<dbReference type="PANTHER" id="PTHR43166:SF30">
    <property type="entry name" value="METHIONINE IMPORT ATP-BINDING PROTEIN METN"/>
    <property type="match status" value="1"/>
</dbReference>
<dbReference type="Pfam" id="PF00005">
    <property type="entry name" value="ABC_tran"/>
    <property type="match status" value="1"/>
</dbReference>
<dbReference type="Pfam" id="PF09383">
    <property type="entry name" value="NIL"/>
    <property type="match status" value="1"/>
</dbReference>
<dbReference type="SMART" id="SM00382">
    <property type="entry name" value="AAA"/>
    <property type="match status" value="1"/>
</dbReference>
<dbReference type="SMART" id="SM00930">
    <property type="entry name" value="NIL"/>
    <property type="match status" value="1"/>
</dbReference>
<dbReference type="SUPFAM" id="SSF55021">
    <property type="entry name" value="ACT-like"/>
    <property type="match status" value="1"/>
</dbReference>
<dbReference type="SUPFAM" id="SSF52540">
    <property type="entry name" value="P-loop containing nucleoside triphosphate hydrolases"/>
    <property type="match status" value="1"/>
</dbReference>
<dbReference type="PROSITE" id="PS00211">
    <property type="entry name" value="ABC_TRANSPORTER_1"/>
    <property type="match status" value="1"/>
</dbReference>
<dbReference type="PROSITE" id="PS50893">
    <property type="entry name" value="ABC_TRANSPORTER_2"/>
    <property type="match status" value="1"/>
</dbReference>
<dbReference type="PROSITE" id="PS51264">
    <property type="entry name" value="METN"/>
    <property type="match status" value="1"/>
</dbReference>
<evidence type="ECO:0000255" key="1">
    <source>
        <dbReference type="HAMAP-Rule" id="MF_01719"/>
    </source>
</evidence>
<reference key="1">
    <citation type="journal article" date="2001" name="Science">
        <title>Complete genome sequence of a virulent isolate of Streptococcus pneumoniae.</title>
        <authorList>
            <person name="Tettelin H."/>
            <person name="Nelson K.E."/>
            <person name="Paulsen I.T."/>
            <person name="Eisen J.A."/>
            <person name="Read T.D."/>
            <person name="Peterson S.N."/>
            <person name="Heidelberg J.F."/>
            <person name="DeBoy R.T."/>
            <person name="Haft D.H."/>
            <person name="Dodson R.J."/>
            <person name="Durkin A.S."/>
            <person name="Gwinn M.L."/>
            <person name="Kolonay J.F."/>
            <person name="Nelson W.C."/>
            <person name="Peterson J.D."/>
            <person name="Umayam L.A."/>
            <person name="White O."/>
            <person name="Salzberg S.L."/>
            <person name="Lewis M.R."/>
            <person name="Radune D."/>
            <person name="Holtzapple E.K."/>
            <person name="Khouri H.M."/>
            <person name="Wolf A.M."/>
            <person name="Utterback T.R."/>
            <person name="Hansen C.L."/>
            <person name="McDonald L.A."/>
            <person name="Feldblyum T.V."/>
            <person name="Angiuoli S.V."/>
            <person name="Dickinson T."/>
            <person name="Hickey E.K."/>
            <person name="Holt I.E."/>
            <person name="Loftus B.J."/>
            <person name="Yang F."/>
            <person name="Smith H.O."/>
            <person name="Venter J.C."/>
            <person name="Dougherty B.A."/>
            <person name="Morrison D.A."/>
            <person name="Hollingshead S.K."/>
            <person name="Fraser C.M."/>
        </authorList>
    </citation>
    <scope>NUCLEOTIDE SEQUENCE [LARGE SCALE GENOMIC DNA]</scope>
    <source>
        <strain>ATCC BAA-334 / TIGR4</strain>
    </source>
</reference>
<organism>
    <name type="scientific">Streptococcus pneumoniae serotype 4 (strain ATCC BAA-334 / TIGR4)</name>
    <dbReference type="NCBI Taxonomy" id="170187"/>
    <lineage>
        <taxon>Bacteria</taxon>
        <taxon>Bacillati</taxon>
        <taxon>Bacillota</taxon>
        <taxon>Bacilli</taxon>
        <taxon>Lactobacillales</taxon>
        <taxon>Streptococcaceae</taxon>
        <taxon>Streptococcus</taxon>
    </lineage>
</organism>